<keyword id="KW-0963">Cytoplasm</keyword>
<keyword id="KW-0456">Lyase</keyword>
<keyword id="KW-0704">Schiff base</keyword>
<reference key="1">
    <citation type="journal article" date="2007" name="Genome Res.">
        <title>Reductive evolution and niche adaptation inferred from the genome of Mycobacterium ulcerans, the causative agent of Buruli ulcer.</title>
        <authorList>
            <person name="Stinear T.P."/>
            <person name="Seemann T."/>
            <person name="Pidot S."/>
            <person name="Frigui W."/>
            <person name="Reysset G."/>
            <person name="Garnier T."/>
            <person name="Meurice G."/>
            <person name="Simon D."/>
            <person name="Bouchier C."/>
            <person name="Ma L."/>
            <person name="Tichit M."/>
            <person name="Porter J.L."/>
            <person name="Ryan J."/>
            <person name="Johnson P.D.R."/>
            <person name="Davies J.K."/>
            <person name="Jenkin G.A."/>
            <person name="Small P.L.C."/>
            <person name="Jones L.M."/>
            <person name="Tekaia F."/>
            <person name="Laval F."/>
            <person name="Daffe M."/>
            <person name="Parkhill J."/>
            <person name="Cole S.T."/>
        </authorList>
    </citation>
    <scope>NUCLEOTIDE SEQUENCE [LARGE SCALE GENOMIC DNA]</scope>
    <source>
        <strain>Agy99</strain>
    </source>
</reference>
<name>DEOC_MYCUA</name>
<dbReference type="EC" id="4.1.2.4" evidence="1"/>
<dbReference type="EMBL" id="CP000325">
    <property type="protein sequence ID" value="ABL06502.1"/>
    <property type="molecule type" value="Genomic_DNA"/>
</dbReference>
<dbReference type="RefSeq" id="WP_011742101.1">
    <property type="nucleotide sequence ID" value="NC_008611.1"/>
</dbReference>
<dbReference type="SMR" id="A0PVY3"/>
<dbReference type="GeneID" id="93438829"/>
<dbReference type="KEGG" id="mul:MUL_4546"/>
<dbReference type="eggNOG" id="COG0274">
    <property type="taxonomic scope" value="Bacteria"/>
</dbReference>
<dbReference type="HOGENOM" id="CLU_053595_0_0_11"/>
<dbReference type="UniPathway" id="UPA00002">
    <property type="reaction ID" value="UER00468"/>
</dbReference>
<dbReference type="Proteomes" id="UP000000765">
    <property type="component" value="Chromosome"/>
</dbReference>
<dbReference type="GO" id="GO:0005737">
    <property type="term" value="C:cytoplasm"/>
    <property type="evidence" value="ECO:0007669"/>
    <property type="project" value="UniProtKB-SubCell"/>
</dbReference>
<dbReference type="GO" id="GO:0004139">
    <property type="term" value="F:deoxyribose-phosphate aldolase activity"/>
    <property type="evidence" value="ECO:0007669"/>
    <property type="project" value="UniProtKB-UniRule"/>
</dbReference>
<dbReference type="GO" id="GO:0006018">
    <property type="term" value="P:2-deoxyribose 1-phosphate catabolic process"/>
    <property type="evidence" value="ECO:0007669"/>
    <property type="project" value="UniProtKB-UniRule"/>
</dbReference>
<dbReference type="GO" id="GO:0016052">
    <property type="term" value="P:carbohydrate catabolic process"/>
    <property type="evidence" value="ECO:0007669"/>
    <property type="project" value="TreeGrafter"/>
</dbReference>
<dbReference type="GO" id="GO:0009264">
    <property type="term" value="P:deoxyribonucleotide catabolic process"/>
    <property type="evidence" value="ECO:0007669"/>
    <property type="project" value="InterPro"/>
</dbReference>
<dbReference type="CDD" id="cd00959">
    <property type="entry name" value="DeoC"/>
    <property type="match status" value="1"/>
</dbReference>
<dbReference type="Gene3D" id="3.20.20.70">
    <property type="entry name" value="Aldolase class I"/>
    <property type="match status" value="1"/>
</dbReference>
<dbReference type="HAMAP" id="MF_00114">
    <property type="entry name" value="DeoC_type1"/>
    <property type="match status" value="1"/>
</dbReference>
<dbReference type="InterPro" id="IPR013785">
    <property type="entry name" value="Aldolase_TIM"/>
</dbReference>
<dbReference type="InterPro" id="IPR011343">
    <property type="entry name" value="DeoC"/>
</dbReference>
<dbReference type="InterPro" id="IPR002915">
    <property type="entry name" value="DeoC/FbaB/LacD_aldolase"/>
</dbReference>
<dbReference type="InterPro" id="IPR028581">
    <property type="entry name" value="DeoC_typeI"/>
</dbReference>
<dbReference type="NCBIfam" id="TIGR00126">
    <property type="entry name" value="deoC"/>
    <property type="match status" value="1"/>
</dbReference>
<dbReference type="PANTHER" id="PTHR10889">
    <property type="entry name" value="DEOXYRIBOSE-PHOSPHATE ALDOLASE"/>
    <property type="match status" value="1"/>
</dbReference>
<dbReference type="PANTHER" id="PTHR10889:SF1">
    <property type="entry name" value="DEOXYRIBOSE-PHOSPHATE ALDOLASE"/>
    <property type="match status" value="1"/>
</dbReference>
<dbReference type="Pfam" id="PF01791">
    <property type="entry name" value="DeoC"/>
    <property type="match status" value="1"/>
</dbReference>
<dbReference type="PIRSF" id="PIRSF001357">
    <property type="entry name" value="DeoC"/>
    <property type="match status" value="1"/>
</dbReference>
<dbReference type="SMART" id="SM01133">
    <property type="entry name" value="DeoC"/>
    <property type="match status" value="1"/>
</dbReference>
<dbReference type="SUPFAM" id="SSF51569">
    <property type="entry name" value="Aldolase"/>
    <property type="match status" value="1"/>
</dbReference>
<feature type="chain" id="PRO_1000094853" description="Deoxyribose-phosphate aldolase">
    <location>
        <begin position="1"/>
        <end position="226"/>
    </location>
</feature>
<feature type="active site" description="Proton donor/acceptor" evidence="1">
    <location>
        <position position="93"/>
    </location>
</feature>
<feature type="active site" description="Schiff-base intermediate with acetaldehyde" evidence="1">
    <location>
        <position position="159"/>
    </location>
</feature>
<feature type="active site" description="Proton donor/acceptor" evidence="1">
    <location>
        <position position="189"/>
    </location>
</feature>
<evidence type="ECO:0000255" key="1">
    <source>
        <dbReference type="HAMAP-Rule" id="MF_00114"/>
    </source>
</evidence>
<sequence length="226" mass="22075">MPGQPTRDQVAALVDHTLLKPEATAADVVALVAEAADLGVYAVCVSPSMVPAAVSAGGVRVATVAGFPSGKHASAIKAHEAALAVACGAVEVDMVIDVGAALAGHLDAVRSDIEAVRCATSGAVLKVIVESAALLGLADESTLIGVCRVAEDAGADFVKTSTGFHPAGGASTRAVEVMASAVGGRLGVKASGGIRTATDAVAMLSAGATRLGLSGTRAVLEGLGQN</sequence>
<protein>
    <recommendedName>
        <fullName evidence="1">Deoxyribose-phosphate aldolase</fullName>
        <shortName evidence="1">DERA</shortName>
        <ecNumber evidence="1">4.1.2.4</ecNumber>
    </recommendedName>
    <alternativeName>
        <fullName evidence="1">2-deoxy-D-ribose 5-phosphate aldolase</fullName>
    </alternativeName>
    <alternativeName>
        <fullName evidence="1">Phosphodeoxyriboaldolase</fullName>
        <shortName evidence="1">Deoxyriboaldolase</shortName>
    </alternativeName>
</protein>
<comment type="function">
    <text evidence="1">Catalyzes a reversible aldol reaction between acetaldehyde and D-glyceraldehyde 3-phosphate to generate 2-deoxy-D-ribose 5-phosphate.</text>
</comment>
<comment type="catalytic activity">
    <reaction evidence="1">
        <text>2-deoxy-D-ribose 5-phosphate = D-glyceraldehyde 3-phosphate + acetaldehyde</text>
        <dbReference type="Rhea" id="RHEA:12821"/>
        <dbReference type="ChEBI" id="CHEBI:15343"/>
        <dbReference type="ChEBI" id="CHEBI:59776"/>
        <dbReference type="ChEBI" id="CHEBI:62877"/>
        <dbReference type="EC" id="4.1.2.4"/>
    </reaction>
</comment>
<comment type="pathway">
    <text evidence="1">Carbohydrate degradation; 2-deoxy-D-ribose 1-phosphate degradation; D-glyceraldehyde 3-phosphate and acetaldehyde from 2-deoxy-alpha-D-ribose 1-phosphate: step 2/2.</text>
</comment>
<comment type="subcellular location">
    <subcellularLocation>
        <location evidence="1">Cytoplasm</location>
    </subcellularLocation>
</comment>
<comment type="similarity">
    <text evidence="1">Belongs to the DeoC/FbaB aldolase family. DeoC type 1 subfamily.</text>
</comment>
<accession>A0PVY3</accession>
<organism>
    <name type="scientific">Mycobacterium ulcerans (strain Agy99)</name>
    <dbReference type="NCBI Taxonomy" id="362242"/>
    <lineage>
        <taxon>Bacteria</taxon>
        <taxon>Bacillati</taxon>
        <taxon>Actinomycetota</taxon>
        <taxon>Actinomycetes</taxon>
        <taxon>Mycobacteriales</taxon>
        <taxon>Mycobacteriaceae</taxon>
        <taxon>Mycobacterium</taxon>
        <taxon>Mycobacterium ulcerans group</taxon>
    </lineage>
</organism>
<proteinExistence type="inferred from homology"/>
<gene>
    <name evidence="1" type="primary">deoC</name>
    <name type="ordered locus">MUL_4546</name>
</gene>